<gene>
    <name type="primary">MXD1</name>
    <name type="synonym">MAD</name>
</gene>
<comment type="function">
    <text evidence="5 7">Component of a transcriptional repressor complex together with MAX (PubMed:8425218). In complex with MAX binds to the core DNA sequence 5'-CAC[GA]TG-3' (PubMed:8425218). Antagonizes MYC transcriptional activity by competing with MYC for MAX binding (PubMed:8425218). Binds to the TERT promoter and represses telomerase expression, possibly by interfering with MYC binding (PubMed:12837246).</text>
</comment>
<comment type="subunit">
    <text evidence="1 7">Heterodimer with MAX; the interaction is required for DNA-binding (PubMed:8425218). DNA binding requires dimerization with another bHLH protein; does not form homodimers, and does not bind to DNA in the absence of MAX in vitro (PubMed:8425218). Interacts with RNF17 (By similarity).</text>
</comment>
<comment type="interaction">
    <interactant intactId="EBI-8833637">
        <id>Q05195</id>
    </interactant>
    <interactant intactId="EBI-751711">
        <id>P61244</id>
        <label>MAX</label>
    </interactant>
    <organismsDiffer>false</organismsDiffer>
    <experiments>4</experiments>
</comment>
<comment type="subcellular location">
    <subcellularLocation>
        <location evidence="9">Nucleus</location>
    </subcellularLocation>
</comment>
<comment type="alternative products">
    <event type="alternative splicing"/>
    <isoform>
        <id>Q05195-1</id>
        <name>1</name>
        <sequence type="displayed"/>
    </isoform>
    <isoform>
        <id>Q05195-2</id>
        <name>2</name>
        <sequence type="described" ref="VSP_043074"/>
    </isoform>
</comment>
<comment type="PTM">
    <text evidence="6">Ubiquitinated by BIRC2/c-IAP1, leading to its subsequent degradation by the proteasome.</text>
</comment>
<organism>
    <name type="scientific">Homo sapiens</name>
    <name type="common">Human</name>
    <dbReference type="NCBI Taxonomy" id="9606"/>
    <lineage>
        <taxon>Eukaryota</taxon>
        <taxon>Metazoa</taxon>
        <taxon>Chordata</taxon>
        <taxon>Craniata</taxon>
        <taxon>Vertebrata</taxon>
        <taxon>Euteleostomi</taxon>
        <taxon>Mammalia</taxon>
        <taxon>Eutheria</taxon>
        <taxon>Euarchontoglires</taxon>
        <taxon>Primates</taxon>
        <taxon>Haplorrhini</taxon>
        <taxon>Catarrhini</taxon>
        <taxon>Hominidae</taxon>
        <taxon>Homo</taxon>
    </lineage>
</organism>
<dbReference type="EMBL" id="L06895">
    <property type="protein sequence ID" value="AAA36194.1"/>
    <property type="molecule type" value="mRNA"/>
</dbReference>
<dbReference type="EMBL" id="CR536495">
    <property type="protein sequence ID" value="CAG38734.1"/>
    <property type="molecule type" value="mRNA"/>
</dbReference>
<dbReference type="EMBL" id="CR541692">
    <property type="protein sequence ID" value="CAG46493.1"/>
    <property type="molecule type" value="mRNA"/>
</dbReference>
<dbReference type="EMBL" id="AK312734">
    <property type="protein sequence ID" value="BAG35605.1"/>
    <property type="molecule type" value="mRNA"/>
</dbReference>
<dbReference type="EMBL" id="AC019206">
    <property type="protein sequence ID" value="AAY14867.1"/>
    <property type="molecule type" value="Genomic_DNA"/>
</dbReference>
<dbReference type="EMBL" id="CH471053">
    <property type="protein sequence ID" value="EAW99839.1"/>
    <property type="molecule type" value="Genomic_DNA"/>
</dbReference>
<dbReference type="EMBL" id="BC069377">
    <property type="protein sequence ID" value="AAH69377.1"/>
    <property type="molecule type" value="mRNA"/>
</dbReference>
<dbReference type="EMBL" id="BC069433">
    <property type="protein sequence ID" value="AAH69433.1"/>
    <property type="molecule type" value="mRNA"/>
</dbReference>
<dbReference type="EMBL" id="BC098396">
    <property type="protein sequence ID" value="AAH98396.1"/>
    <property type="molecule type" value="mRNA"/>
</dbReference>
<dbReference type="EMBL" id="BC113531">
    <property type="protein sequence ID" value="AAI13532.1"/>
    <property type="molecule type" value="mRNA"/>
</dbReference>
<dbReference type="EMBL" id="BC117260">
    <property type="protein sequence ID" value="AAI17261.1"/>
    <property type="molecule type" value="mRNA"/>
</dbReference>
<dbReference type="EMBL" id="BC143831">
    <property type="protein sequence ID" value="AAI43832.1"/>
    <property type="molecule type" value="mRNA"/>
</dbReference>
<dbReference type="CCDS" id="CCDS1896.1">
    <molecule id="Q05195-1"/>
</dbReference>
<dbReference type="CCDS" id="CCDS56123.1">
    <molecule id="Q05195-2"/>
</dbReference>
<dbReference type="PIR" id="A45181">
    <property type="entry name" value="A45181"/>
</dbReference>
<dbReference type="RefSeq" id="NP_001189442.1">
    <property type="nucleotide sequence ID" value="NM_001202513.1"/>
</dbReference>
<dbReference type="RefSeq" id="NP_001189443.1">
    <molecule id="Q05195-2"/>
    <property type="nucleotide sequence ID" value="NM_001202514.2"/>
</dbReference>
<dbReference type="RefSeq" id="NP_002348.1">
    <molecule id="Q05195-1"/>
    <property type="nucleotide sequence ID" value="NM_002357.4"/>
</dbReference>
<dbReference type="PDB" id="1E91">
    <property type="method" value="NMR"/>
    <property type="chains" value="B=8-20"/>
</dbReference>
<dbReference type="PDB" id="1G1E">
    <property type="method" value="NMR"/>
    <property type="chains" value="A=6-21"/>
</dbReference>
<dbReference type="PDB" id="1NLW">
    <property type="method" value="X-ray"/>
    <property type="resolution" value="2.00 A"/>
    <property type="chains" value="A/D=57-136"/>
</dbReference>
<dbReference type="PDB" id="1PD7">
    <property type="method" value="NMR"/>
    <property type="chains" value="B=5-28"/>
</dbReference>
<dbReference type="PDB" id="1S5Q">
    <property type="method" value="NMR"/>
    <property type="chains" value="A=6-21"/>
</dbReference>
<dbReference type="PDBsum" id="1E91"/>
<dbReference type="PDBsum" id="1G1E"/>
<dbReference type="PDBsum" id="1NLW"/>
<dbReference type="PDBsum" id="1PD7"/>
<dbReference type="PDBsum" id="1S5Q"/>
<dbReference type="BMRB" id="Q05195"/>
<dbReference type="SMR" id="Q05195"/>
<dbReference type="BioGRID" id="110259">
    <property type="interactions" value="52"/>
</dbReference>
<dbReference type="ComplexPortal" id="CPX-104">
    <property type="entry name" value="MAD-MAX transcriptional repressor complex"/>
</dbReference>
<dbReference type="ComplexPortal" id="CPX-2519">
    <property type="entry name" value="MXD1-MLX transcriptional repressor complex"/>
</dbReference>
<dbReference type="CORUM" id="Q05195"/>
<dbReference type="DIP" id="DIP-204N"/>
<dbReference type="ELM" id="Q05195"/>
<dbReference type="FunCoup" id="Q05195">
    <property type="interactions" value="1881"/>
</dbReference>
<dbReference type="IntAct" id="Q05195">
    <property type="interactions" value="15"/>
</dbReference>
<dbReference type="MINT" id="Q05195"/>
<dbReference type="STRING" id="9606.ENSP00000264444"/>
<dbReference type="iPTMnet" id="Q05195"/>
<dbReference type="PhosphoSitePlus" id="Q05195"/>
<dbReference type="BioMuta" id="MXD1"/>
<dbReference type="DMDM" id="729978"/>
<dbReference type="jPOST" id="Q05195"/>
<dbReference type="MassIVE" id="Q05195"/>
<dbReference type="PaxDb" id="9606-ENSP00000264444"/>
<dbReference type="PeptideAtlas" id="Q05195"/>
<dbReference type="ProteomicsDB" id="58314">
    <molecule id="Q05195-1"/>
</dbReference>
<dbReference type="ProteomicsDB" id="58315">
    <molecule id="Q05195-2"/>
</dbReference>
<dbReference type="Antibodypedia" id="893">
    <property type="antibodies" value="172 antibodies from 32 providers"/>
</dbReference>
<dbReference type="DNASU" id="4084"/>
<dbReference type="Ensembl" id="ENST00000264444.7">
    <molecule id="Q05195-1"/>
    <property type="protein sequence ID" value="ENSP00000264444.2"/>
    <property type="gene ID" value="ENSG00000059728.11"/>
</dbReference>
<dbReference type="Ensembl" id="ENST00000540449.5">
    <molecule id="Q05195-2"/>
    <property type="protein sequence ID" value="ENSP00000443935.1"/>
    <property type="gene ID" value="ENSG00000059728.11"/>
</dbReference>
<dbReference type="GeneID" id="4084"/>
<dbReference type="KEGG" id="hsa:4084"/>
<dbReference type="MANE-Select" id="ENST00000264444.7">
    <property type="protein sequence ID" value="ENSP00000264444.2"/>
    <property type="RefSeq nucleotide sequence ID" value="NM_002357.4"/>
    <property type="RefSeq protein sequence ID" value="NP_002348.1"/>
</dbReference>
<dbReference type="UCSC" id="uc002sfy.4">
    <molecule id="Q05195-1"/>
    <property type="organism name" value="human"/>
</dbReference>
<dbReference type="AGR" id="HGNC:6761"/>
<dbReference type="CTD" id="4084"/>
<dbReference type="DisGeNET" id="4084"/>
<dbReference type="GeneCards" id="MXD1"/>
<dbReference type="HGNC" id="HGNC:6761">
    <property type="gene designation" value="MXD1"/>
</dbReference>
<dbReference type="HPA" id="ENSG00000059728">
    <property type="expression patterns" value="Tissue enhanced (bone marrow, esophagus)"/>
</dbReference>
<dbReference type="MalaCards" id="MXD1"/>
<dbReference type="MIM" id="600021">
    <property type="type" value="gene"/>
</dbReference>
<dbReference type="neXtProt" id="NX_Q05195"/>
<dbReference type="OpenTargets" id="ENSG00000059728"/>
<dbReference type="PharmGKB" id="PA30520"/>
<dbReference type="VEuPathDB" id="HostDB:ENSG00000059728"/>
<dbReference type="eggNOG" id="KOG2483">
    <property type="taxonomic scope" value="Eukaryota"/>
</dbReference>
<dbReference type="GeneTree" id="ENSGT00940000159446"/>
<dbReference type="HOGENOM" id="CLU_082604_0_1_1"/>
<dbReference type="InParanoid" id="Q05195"/>
<dbReference type="OMA" id="SSTHNEM"/>
<dbReference type="OrthoDB" id="5920083at2759"/>
<dbReference type="PAN-GO" id="Q05195">
    <property type="GO annotations" value="3 GO annotations based on evolutionary models"/>
</dbReference>
<dbReference type="PhylomeDB" id="Q05195"/>
<dbReference type="TreeFam" id="TF315654"/>
<dbReference type="PathwayCommons" id="Q05195"/>
<dbReference type="SignaLink" id="Q05195"/>
<dbReference type="SIGNOR" id="Q05195"/>
<dbReference type="BioGRID-ORCS" id="4084">
    <property type="hits" value="9 hits in 1180 CRISPR screens"/>
</dbReference>
<dbReference type="ChiTaRS" id="MXD1">
    <property type="organism name" value="human"/>
</dbReference>
<dbReference type="EvolutionaryTrace" id="Q05195"/>
<dbReference type="GeneWiki" id="MXD1"/>
<dbReference type="GenomeRNAi" id="4084"/>
<dbReference type="Pharos" id="Q05195">
    <property type="development level" value="Tbio"/>
</dbReference>
<dbReference type="PRO" id="PR:Q05195"/>
<dbReference type="Proteomes" id="UP000005640">
    <property type="component" value="Chromosome 2"/>
</dbReference>
<dbReference type="RNAct" id="Q05195">
    <property type="molecule type" value="protein"/>
</dbReference>
<dbReference type="Bgee" id="ENSG00000059728">
    <property type="expression patterns" value="Expressed in buccal mucosa cell and 185 other cell types or tissues"/>
</dbReference>
<dbReference type="ExpressionAtlas" id="Q05195">
    <property type="expression patterns" value="baseline and differential"/>
</dbReference>
<dbReference type="GO" id="GO:0000785">
    <property type="term" value="C:chromatin"/>
    <property type="evidence" value="ECO:0000314"/>
    <property type="project" value="BHF-UCL"/>
</dbReference>
<dbReference type="GO" id="GO:0005829">
    <property type="term" value="C:cytosol"/>
    <property type="evidence" value="ECO:0000314"/>
    <property type="project" value="HPA"/>
</dbReference>
<dbReference type="GO" id="GO:0070443">
    <property type="term" value="C:Mad-Max complex"/>
    <property type="evidence" value="ECO:0000353"/>
    <property type="project" value="ComplexPortal"/>
</dbReference>
<dbReference type="GO" id="GO:0005739">
    <property type="term" value="C:mitochondrion"/>
    <property type="evidence" value="ECO:0000314"/>
    <property type="project" value="HPA"/>
</dbReference>
<dbReference type="GO" id="GO:0005654">
    <property type="term" value="C:nucleoplasm"/>
    <property type="evidence" value="ECO:0000314"/>
    <property type="project" value="HPA"/>
</dbReference>
<dbReference type="GO" id="GO:0005634">
    <property type="term" value="C:nucleus"/>
    <property type="evidence" value="ECO:0000314"/>
    <property type="project" value="ComplexPortal"/>
</dbReference>
<dbReference type="GO" id="GO:0000981">
    <property type="term" value="F:DNA-binding transcription factor activity, RNA polymerase II-specific"/>
    <property type="evidence" value="ECO:0000247"/>
    <property type="project" value="NTNU_SB"/>
</dbReference>
<dbReference type="GO" id="GO:0001227">
    <property type="term" value="F:DNA-binding transcription repressor activity, RNA polymerase II-specific"/>
    <property type="evidence" value="ECO:0000314"/>
    <property type="project" value="NTNU_SB"/>
</dbReference>
<dbReference type="GO" id="GO:0046983">
    <property type="term" value="F:protein dimerization activity"/>
    <property type="evidence" value="ECO:0007669"/>
    <property type="project" value="InterPro"/>
</dbReference>
<dbReference type="GO" id="GO:0000978">
    <property type="term" value="F:RNA polymerase II cis-regulatory region sequence-specific DNA binding"/>
    <property type="evidence" value="ECO:0000314"/>
    <property type="project" value="NTNU_SB"/>
</dbReference>
<dbReference type="GO" id="GO:0000122">
    <property type="term" value="P:negative regulation of transcription by RNA polymerase II"/>
    <property type="evidence" value="ECO:0000314"/>
    <property type="project" value="NTNU_SB"/>
</dbReference>
<dbReference type="GO" id="GO:0006357">
    <property type="term" value="P:regulation of transcription by RNA polymerase II"/>
    <property type="evidence" value="ECO:0000318"/>
    <property type="project" value="GO_Central"/>
</dbReference>
<dbReference type="CDD" id="cd18931">
    <property type="entry name" value="bHLHzip_Mad1"/>
    <property type="match status" value="1"/>
</dbReference>
<dbReference type="FunFam" id="4.10.280.10:FF:000014">
    <property type="entry name" value="Max dimerization protein 1"/>
    <property type="match status" value="1"/>
</dbReference>
<dbReference type="Gene3D" id="4.10.280.10">
    <property type="entry name" value="Helix-loop-helix DNA-binding domain"/>
    <property type="match status" value="1"/>
</dbReference>
<dbReference type="IDEAL" id="IID00165"/>
<dbReference type="InterPro" id="IPR011598">
    <property type="entry name" value="bHLH_dom"/>
</dbReference>
<dbReference type="InterPro" id="IPR036638">
    <property type="entry name" value="HLH_DNA-bd_sf"/>
</dbReference>
<dbReference type="InterPro" id="IPR040157">
    <property type="entry name" value="MXD1_bHLHzip"/>
</dbReference>
<dbReference type="PANTHER" id="PTHR11969:SF18">
    <property type="entry name" value="MAX DIMERIZATION PROTEIN 1"/>
    <property type="match status" value="1"/>
</dbReference>
<dbReference type="PANTHER" id="PTHR11969">
    <property type="entry name" value="MAX DIMERIZATION, MAD"/>
    <property type="match status" value="1"/>
</dbReference>
<dbReference type="Pfam" id="PF00010">
    <property type="entry name" value="HLH"/>
    <property type="match status" value="1"/>
</dbReference>
<dbReference type="SMART" id="SM00353">
    <property type="entry name" value="HLH"/>
    <property type="match status" value="1"/>
</dbReference>
<dbReference type="SUPFAM" id="SSF47459">
    <property type="entry name" value="HLH, helix-loop-helix DNA-binding domain"/>
    <property type="match status" value="1"/>
</dbReference>
<dbReference type="PROSITE" id="PS50888">
    <property type="entry name" value="BHLH"/>
    <property type="match status" value="1"/>
</dbReference>
<accession>Q05195</accession>
<accession>B2R6V8</accession>
<accession>B7ZLI6</accession>
<accession>D6W5G2</accession>
<accession>Q6FI41</accession>
<name>MAD1_HUMAN</name>
<protein>
    <recommendedName>
        <fullName>Max dimerization protein 1</fullName>
        <shortName>Max dimerizer 1</shortName>
    </recommendedName>
    <alternativeName>
        <fullName>Protein MAD</fullName>
    </alternativeName>
</protein>
<sequence length="221" mass="25254">MAAAVRMNIQMLLEAADYLERREREAEHGYASMLPYNNKDRDALKRRNKSKKNNSSSRSTHNEMEKNRRAHLRLCLEKLKGLVPLGPESSRHTTLSLLTKAKLHIKKLEDCDRKAVHQIDQLQREQRHLKRQLEKLGIERIRMDSIGSTVSSERSDSDREEIDVDVESTDYLTGDLDWSSSSVSDSDERGSMQSLGSDEGYSSTSIKRIKLQDSHKACLGL</sequence>
<keyword id="KW-0002">3D-structure</keyword>
<keyword id="KW-0025">Alternative splicing</keyword>
<keyword id="KW-0238">DNA-binding</keyword>
<keyword id="KW-0539">Nucleus</keyword>
<keyword id="KW-1267">Proteomics identification</keyword>
<keyword id="KW-1185">Reference proteome</keyword>
<keyword id="KW-0678">Repressor</keyword>
<keyword id="KW-0804">Transcription</keyword>
<keyword id="KW-0805">Transcription regulation</keyword>
<keyword id="KW-0832">Ubl conjugation</keyword>
<proteinExistence type="evidence at protein level"/>
<reference key="1">
    <citation type="journal article" date="1993" name="Cell">
        <title>Mad: a heterodimeric partner for Max that antagonizes Myc transcriptional activity.</title>
        <authorList>
            <person name="Ayer D.E."/>
            <person name="Kretzner L."/>
            <person name="Eisenman R.N."/>
        </authorList>
    </citation>
    <scope>NUCLEOTIDE SEQUENCE [MRNA] (ISOFORM 1)</scope>
    <scope>FUNCTION</scope>
    <scope>INTERACTION WITH MAX</scope>
    <scope>SUBUNIT</scope>
    <scope>SUBCELLULAR LOCATION</scope>
    <source>
        <tissue>Lung</tissue>
    </source>
</reference>
<reference key="2">
    <citation type="submission" date="2004-06" db="EMBL/GenBank/DDBJ databases">
        <title>Cloning of human full open reading frames in Gateway(TM) system entry vector (pDONR201).</title>
        <authorList>
            <person name="Halleck A."/>
            <person name="Ebert L."/>
            <person name="Mkoundinya M."/>
            <person name="Schick M."/>
            <person name="Eisenstein S."/>
            <person name="Neubert P."/>
            <person name="Kstrang K."/>
            <person name="Schatten R."/>
            <person name="Shen B."/>
            <person name="Henze S."/>
            <person name="Mar W."/>
            <person name="Korn B."/>
            <person name="Zuo D."/>
            <person name="Hu Y."/>
            <person name="LaBaer J."/>
        </authorList>
    </citation>
    <scope>NUCLEOTIDE SEQUENCE [LARGE SCALE MRNA] (ISOFORM 1)</scope>
</reference>
<reference key="3">
    <citation type="journal article" date="2004" name="Nat. Genet.">
        <title>Complete sequencing and characterization of 21,243 full-length human cDNAs.</title>
        <authorList>
            <person name="Ota T."/>
            <person name="Suzuki Y."/>
            <person name="Nishikawa T."/>
            <person name="Otsuki T."/>
            <person name="Sugiyama T."/>
            <person name="Irie R."/>
            <person name="Wakamatsu A."/>
            <person name="Hayashi K."/>
            <person name="Sato H."/>
            <person name="Nagai K."/>
            <person name="Kimura K."/>
            <person name="Makita H."/>
            <person name="Sekine M."/>
            <person name="Obayashi M."/>
            <person name="Nishi T."/>
            <person name="Shibahara T."/>
            <person name="Tanaka T."/>
            <person name="Ishii S."/>
            <person name="Yamamoto J."/>
            <person name="Saito K."/>
            <person name="Kawai Y."/>
            <person name="Isono Y."/>
            <person name="Nakamura Y."/>
            <person name="Nagahari K."/>
            <person name="Murakami K."/>
            <person name="Yasuda T."/>
            <person name="Iwayanagi T."/>
            <person name="Wagatsuma M."/>
            <person name="Shiratori A."/>
            <person name="Sudo H."/>
            <person name="Hosoiri T."/>
            <person name="Kaku Y."/>
            <person name="Kodaira H."/>
            <person name="Kondo H."/>
            <person name="Sugawara M."/>
            <person name="Takahashi M."/>
            <person name="Kanda K."/>
            <person name="Yokoi T."/>
            <person name="Furuya T."/>
            <person name="Kikkawa E."/>
            <person name="Omura Y."/>
            <person name="Abe K."/>
            <person name="Kamihara K."/>
            <person name="Katsuta N."/>
            <person name="Sato K."/>
            <person name="Tanikawa M."/>
            <person name="Yamazaki M."/>
            <person name="Ninomiya K."/>
            <person name="Ishibashi T."/>
            <person name="Yamashita H."/>
            <person name="Murakawa K."/>
            <person name="Fujimori K."/>
            <person name="Tanai H."/>
            <person name="Kimata M."/>
            <person name="Watanabe M."/>
            <person name="Hiraoka S."/>
            <person name="Chiba Y."/>
            <person name="Ishida S."/>
            <person name="Ono Y."/>
            <person name="Takiguchi S."/>
            <person name="Watanabe S."/>
            <person name="Yosida M."/>
            <person name="Hotuta T."/>
            <person name="Kusano J."/>
            <person name="Kanehori K."/>
            <person name="Takahashi-Fujii A."/>
            <person name="Hara H."/>
            <person name="Tanase T.-O."/>
            <person name="Nomura Y."/>
            <person name="Togiya S."/>
            <person name="Komai F."/>
            <person name="Hara R."/>
            <person name="Takeuchi K."/>
            <person name="Arita M."/>
            <person name="Imose N."/>
            <person name="Musashino K."/>
            <person name="Yuuki H."/>
            <person name="Oshima A."/>
            <person name="Sasaki N."/>
            <person name="Aotsuka S."/>
            <person name="Yoshikawa Y."/>
            <person name="Matsunawa H."/>
            <person name="Ichihara T."/>
            <person name="Shiohata N."/>
            <person name="Sano S."/>
            <person name="Moriya S."/>
            <person name="Momiyama H."/>
            <person name="Satoh N."/>
            <person name="Takami S."/>
            <person name="Terashima Y."/>
            <person name="Suzuki O."/>
            <person name="Nakagawa S."/>
            <person name="Senoh A."/>
            <person name="Mizoguchi H."/>
            <person name="Goto Y."/>
            <person name="Shimizu F."/>
            <person name="Wakebe H."/>
            <person name="Hishigaki H."/>
            <person name="Watanabe T."/>
            <person name="Sugiyama A."/>
            <person name="Takemoto M."/>
            <person name="Kawakami B."/>
            <person name="Yamazaki M."/>
            <person name="Watanabe K."/>
            <person name="Kumagai A."/>
            <person name="Itakura S."/>
            <person name="Fukuzumi Y."/>
            <person name="Fujimori Y."/>
            <person name="Komiyama M."/>
            <person name="Tashiro H."/>
            <person name="Tanigami A."/>
            <person name="Fujiwara T."/>
            <person name="Ono T."/>
            <person name="Yamada K."/>
            <person name="Fujii Y."/>
            <person name="Ozaki K."/>
            <person name="Hirao M."/>
            <person name="Ohmori Y."/>
            <person name="Kawabata A."/>
            <person name="Hikiji T."/>
            <person name="Kobatake N."/>
            <person name="Inagaki H."/>
            <person name="Ikema Y."/>
            <person name="Okamoto S."/>
            <person name="Okitani R."/>
            <person name="Kawakami T."/>
            <person name="Noguchi S."/>
            <person name="Itoh T."/>
            <person name="Shigeta K."/>
            <person name="Senba T."/>
            <person name="Matsumura K."/>
            <person name="Nakajima Y."/>
            <person name="Mizuno T."/>
            <person name="Morinaga M."/>
            <person name="Sasaki M."/>
            <person name="Togashi T."/>
            <person name="Oyama M."/>
            <person name="Hata H."/>
            <person name="Watanabe M."/>
            <person name="Komatsu T."/>
            <person name="Mizushima-Sugano J."/>
            <person name="Satoh T."/>
            <person name="Shirai Y."/>
            <person name="Takahashi Y."/>
            <person name="Nakagawa K."/>
            <person name="Okumura K."/>
            <person name="Nagase T."/>
            <person name="Nomura N."/>
            <person name="Kikuchi H."/>
            <person name="Masuho Y."/>
            <person name="Yamashita R."/>
            <person name="Nakai K."/>
            <person name="Yada T."/>
            <person name="Nakamura Y."/>
            <person name="Ohara O."/>
            <person name="Isogai T."/>
            <person name="Sugano S."/>
        </authorList>
    </citation>
    <scope>NUCLEOTIDE SEQUENCE [LARGE SCALE MRNA] (ISOFORM 1)</scope>
    <source>
        <tissue>Placenta</tissue>
    </source>
</reference>
<reference key="4">
    <citation type="journal article" date="2005" name="Nature">
        <title>Generation and annotation of the DNA sequences of human chromosomes 2 and 4.</title>
        <authorList>
            <person name="Hillier L.W."/>
            <person name="Graves T.A."/>
            <person name="Fulton R.S."/>
            <person name="Fulton L.A."/>
            <person name="Pepin K.H."/>
            <person name="Minx P."/>
            <person name="Wagner-McPherson C."/>
            <person name="Layman D."/>
            <person name="Wylie K."/>
            <person name="Sekhon M."/>
            <person name="Becker M.C."/>
            <person name="Fewell G.A."/>
            <person name="Delehaunty K.D."/>
            <person name="Miner T.L."/>
            <person name="Nash W.E."/>
            <person name="Kremitzki C."/>
            <person name="Oddy L."/>
            <person name="Du H."/>
            <person name="Sun H."/>
            <person name="Bradshaw-Cordum H."/>
            <person name="Ali J."/>
            <person name="Carter J."/>
            <person name="Cordes M."/>
            <person name="Harris A."/>
            <person name="Isak A."/>
            <person name="van Brunt A."/>
            <person name="Nguyen C."/>
            <person name="Du F."/>
            <person name="Courtney L."/>
            <person name="Kalicki J."/>
            <person name="Ozersky P."/>
            <person name="Abbott S."/>
            <person name="Armstrong J."/>
            <person name="Belter E.A."/>
            <person name="Caruso L."/>
            <person name="Cedroni M."/>
            <person name="Cotton M."/>
            <person name="Davidson T."/>
            <person name="Desai A."/>
            <person name="Elliott G."/>
            <person name="Erb T."/>
            <person name="Fronick C."/>
            <person name="Gaige T."/>
            <person name="Haakenson W."/>
            <person name="Haglund K."/>
            <person name="Holmes A."/>
            <person name="Harkins R."/>
            <person name="Kim K."/>
            <person name="Kruchowski S.S."/>
            <person name="Strong C.M."/>
            <person name="Grewal N."/>
            <person name="Goyea E."/>
            <person name="Hou S."/>
            <person name="Levy A."/>
            <person name="Martinka S."/>
            <person name="Mead K."/>
            <person name="McLellan M.D."/>
            <person name="Meyer R."/>
            <person name="Randall-Maher J."/>
            <person name="Tomlinson C."/>
            <person name="Dauphin-Kohlberg S."/>
            <person name="Kozlowicz-Reilly A."/>
            <person name="Shah N."/>
            <person name="Swearengen-Shahid S."/>
            <person name="Snider J."/>
            <person name="Strong J.T."/>
            <person name="Thompson J."/>
            <person name="Yoakum M."/>
            <person name="Leonard S."/>
            <person name="Pearman C."/>
            <person name="Trani L."/>
            <person name="Radionenko M."/>
            <person name="Waligorski J.E."/>
            <person name="Wang C."/>
            <person name="Rock S.M."/>
            <person name="Tin-Wollam A.-M."/>
            <person name="Maupin R."/>
            <person name="Latreille P."/>
            <person name="Wendl M.C."/>
            <person name="Yang S.-P."/>
            <person name="Pohl C."/>
            <person name="Wallis J.W."/>
            <person name="Spieth J."/>
            <person name="Bieri T.A."/>
            <person name="Berkowicz N."/>
            <person name="Nelson J.O."/>
            <person name="Osborne J."/>
            <person name="Ding L."/>
            <person name="Meyer R."/>
            <person name="Sabo A."/>
            <person name="Shotland Y."/>
            <person name="Sinha P."/>
            <person name="Wohldmann P.E."/>
            <person name="Cook L.L."/>
            <person name="Hickenbotham M.T."/>
            <person name="Eldred J."/>
            <person name="Williams D."/>
            <person name="Jones T.A."/>
            <person name="She X."/>
            <person name="Ciccarelli F.D."/>
            <person name="Izaurralde E."/>
            <person name="Taylor J."/>
            <person name="Schmutz J."/>
            <person name="Myers R.M."/>
            <person name="Cox D.R."/>
            <person name="Huang X."/>
            <person name="McPherson J.D."/>
            <person name="Mardis E.R."/>
            <person name="Clifton S.W."/>
            <person name="Warren W.C."/>
            <person name="Chinwalla A.T."/>
            <person name="Eddy S.R."/>
            <person name="Marra M.A."/>
            <person name="Ovcharenko I."/>
            <person name="Furey T.S."/>
            <person name="Miller W."/>
            <person name="Eichler E.E."/>
            <person name="Bork P."/>
            <person name="Suyama M."/>
            <person name="Torrents D."/>
            <person name="Waterston R.H."/>
            <person name="Wilson R.K."/>
        </authorList>
    </citation>
    <scope>NUCLEOTIDE SEQUENCE [LARGE SCALE GENOMIC DNA]</scope>
</reference>
<reference key="5">
    <citation type="submission" date="2005-09" db="EMBL/GenBank/DDBJ databases">
        <authorList>
            <person name="Mural R.J."/>
            <person name="Istrail S."/>
            <person name="Sutton G.G."/>
            <person name="Florea L."/>
            <person name="Halpern A.L."/>
            <person name="Mobarry C.M."/>
            <person name="Lippert R."/>
            <person name="Walenz B."/>
            <person name="Shatkay H."/>
            <person name="Dew I."/>
            <person name="Miller J.R."/>
            <person name="Flanigan M.J."/>
            <person name="Edwards N.J."/>
            <person name="Bolanos R."/>
            <person name="Fasulo D."/>
            <person name="Halldorsson B.V."/>
            <person name="Hannenhalli S."/>
            <person name="Turner R."/>
            <person name="Yooseph S."/>
            <person name="Lu F."/>
            <person name="Nusskern D.R."/>
            <person name="Shue B.C."/>
            <person name="Zheng X.H."/>
            <person name="Zhong F."/>
            <person name="Delcher A.L."/>
            <person name="Huson D.H."/>
            <person name="Kravitz S.A."/>
            <person name="Mouchard L."/>
            <person name="Reinert K."/>
            <person name="Remington K.A."/>
            <person name="Clark A.G."/>
            <person name="Waterman M.S."/>
            <person name="Eichler E.E."/>
            <person name="Adams M.D."/>
            <person name="Hunkapiller M.W."/>
            <person name="Myers E.W."/>
            <person name="Venter J.C."/>
        </authorList>
    </citation>
    <scope>NUCLEOTIDE SEQUENCE [LARGE SCALE GENOMIC DNA]</scope>
</reference>
<reference key="6">
    <citation type="journal article" date="2004" name="Genome Res.">
        <title>The status, quality, and expansion of the NIH full-length cDNA project: the Mammalian Gene Collection (MGC).</title>
        <authorList>
            <consortium name="The MGC Project Team"/>
        </authorList>
    </citation>
    <scope>NUCLEOTIDE SEQUENCE [LARGE SCALE MRNA] (ISOFORMS 1 AND 2)</scope>
    <source>
        <tissue>Brain</tissue>
        <tissue>Placenta</tissue>
    </source>
</reference>
<reference key="7">
    <citation type="journal article" date="2003" name="Cell">
        <title>Multiple tumor suppressor pathways negatively regulate telomerase.</title>
        <authorList>
            <person name="Lin S.Y."/>
            <person name="Elledge S.J."/>
        </authorList>
    </citation>
    <scope>FUNCTION</scope>
</reference>
<reference key="8">
    <citation type="journal article" date="2007" name="Mol. Cell">
        <title>c-IAP1 cooperates with Myc by acting as a ubiquitin ligase for Mad1.</title>
        <authorList>
            <person name="Xu L."/>
            <person name="Zhu J."/>
            <person name="Hu X."/>
            <person name="Zhu H."/>
            <person name="Kim H.T."/>
            <person name="LaBaer J."/>
            <person name="Goldberg A."/>
            <person name="Yuan J."/>
        </authorList>
    </citation>
    <scope>UBIQUITINATION BY BIRC2/C-IAP1</scope>
</reference>
<feature type="chain" id="PRO_0000127264" description="Max dimerization protein 1">
    <location>
        <begin position="1"/>
        <end position="221"/>
    </location>
</feature>
<feature type="domain" description="bHLH" evidence="3">
    <location>
        <begin position="56"/>
        <end position="108"/>
    </location>
</feature>
<feature type="region of interest" description="Disordered" evidence="4">
    <location>
        <begin position="30"/>
        <end position="68"/>
    </location>
</feature>
<feature type="region of interest" description="Disordered" evidence="4">
    <location>
        <begin position="173"/>
        <end position="204"/>
    </location>
</feature>
<feature type="short sequence motif" description="Nuclear localization signal" evidence="2">
    <location>
        <begin position="21"/>
        <end position="49"/>
    </location>
</feature>
<feature type="compositionally biased region" description="Low complexity" evidence="4">
    <location>
        <begin position="175"/>
        <end position="184"/>
    </location>
</feature>
<feature type="compositionally biased region" description="Polar residues" evidence="4">
    <location>
        <begin position="191"/>
        <end position="204"/>
    </location>
</feature>
<feature type="splice variant" id="VSP_043074" description="In isoform 2." evidence="8">
    <location>
        <begin position="58"/>
        <end position="67"/>
    </location>
</feature>
<feature type="helix" evidence="10">
    <location>
        <begin position="9"/>
        <end position="19"/>
    </location>
</feature>
<feature type="helix" evidence="11">
    <location>
        <begin position="58"/>
        <end position="81"/>
    </location>
</feature>
<feature type="strand" evidence="11">
    <location>
        <begin position="87"/>
        <end position="89"/>
    </location>
</feature>
<feature type="helix" evidence="11">
    <location>
        <begin position="95"/>
        <end position="134"/>
    </location>
</feature>
<evidence type="ECO:0000250" key="1">
    <source>
        <dbReference type="UniProtKB" id="P50538"/>
    </source>
</evidence>
<evidence type="ECO:0000255" key="2"/>
<evidence type="ECO:0000255" key="3">
    <source>
        <dbReference type="PROSITE-ProRule" id="PRU00981"/>
    </source>
</evidence>
<evidence type="ECO:0000256" key="4">
    <source>
        <dbReference type="SAM" id="MobiDB-lite"/>
    </source>
</evidence>
<evidence type="ECO:0000269" key="5">
    <source>
    </source>
</evidence>
<evidence type="ECO:0000269" key="6">
    <source>
    </source>
</evidence>
<evidence type="ECO:0000269" key="7">
    <source>
    </source>
</evidence>
<evidence type="ECO:0000303" key="8">
    <source>
    </source>
</evidence>
<evidence type="ECO:0000305" key="9">
    <source>
    </source>
</evidence>
<evidence type="ECO:0007829" key="10">
    <source>
        <dbReference type="PDB" id="1E91"/>
    </source>
</evidence>
<evidence type="ECO:0007829" key="11">
    <source>
        <dbReference type="PDB" id="1NLW"/>
    </source>
</evidence>